<keyword id="KW-0143">Chaperone</keyword>
<keyword id="KW-0963">Cytoplasm</keyword>
<keyword id="KW-0235">DNA replication</keyword>
<keyword id="KW-0479">Metal-binding</keyword>
<keyword id="KW-0677">Repeat</keyword>
<keyword id="KW-0346">Stress response</keyword>
<keyword id="KW-0862">Zinc</keyword>
<keyword id="KW-0863">Zinc-finger</keyword>
<sequence>MAEQDYYDILGVSKDASEKDIKRAYRRLAAKYHPDVNHEPGAEEKFKKINEAYETLSDSQKRAQYDQFGSAGPQGAGGQGFGGFGGGQAYSNFGGGFDDIFSQFFGGGGRTRRDPTAPRQGRDLQYAMTLDFMDAVFGKTTTIKYDRDAECKTCHGTGAKPGKSPITCPRCHGAGVITSVRQTPLGNMQTQTTCPECNGTGKIIKPEDRCDTCHGAGHVHERHELEVKVPAGVDDGQQMRLQHQGDAGENGGPAGDLYIVFRVTPSREFRRDGSTIYVDRDISFAQAALGDEVKVKTVHGDVNLKIPAGTQSETNFRLRGKGVPHLNGNGNGDEHVTVHVKTPKSLNKRQREAMLAFAAASGEDVKGVKKTVLDKLRDAFEDK</sequence>
<comment type="function">
    <text evidence="1">Participates actively in the response to hyperosmotic and heat shock by preventing the aggregation of stress-denatured proteins and by disaggregating proteins, also in an autonomous, DnaK-independent fashion. Unfolded proteins bind initially to DnaJ; upon interaction with the DnaJ-bound protein, DnaK hydrolyzes its bound ATP, resulting in the formation of a stable complex. GrpE releases ADP from DnaK; ATP binding to DnaK triggers the release of the substrate protein, thus completing the reaction cycle. Several rounds of ATP-dependent interactions between DnaJ, DnaK and GrpE are required for fully efficient folding. Also involved, together with DnaK and GrpE, in the DNA replication of plasmids through activation of initiation proteins.</text>
</comment>
<comment type="cofactor">
    <cofactor evidence="1">
        <name>Zn(2+)</name>
        <dbReference type="ChEBI" id="CHEBI:29105"/>
    </cofactor>
    <text evidence="1">Binds 2 Zn(2+) ions per monomer.</text>
</comment>
<comment type="subunit">
    <text evidence="1">Homodimer.</text>
</comment>
<comment type="subcellular location">
    <subcellularLocation>
        <location evidence="1">Cytoplasm</location>
    </subcellularLocation>
</comment>
<comment type="domain">
    <text evidence="1">The J domain is necessary and sufficient to stimulate DnaK ATPase activity. Zinc center 1 plays an important role in the autonomous, DnaK-independent chaperone activity of DnaJ. Zinc center 2 is essential for interaction with DnaK and for DnaJ activity.</text>
</comment>
<comment type="similarity">
    <text evidence="1">Belongs to the DnaJ family.</text>
</comment>
<reference key="1">
    <citation type="journal article" date="2008" name="DNA Res.">
        <title>Comparative genome analysis of Lactobacillus reuteri and Lactobacillus fermentum reveal a genomic island for reuterin and cobalamin production.</title>
        <authorList>
            <person name="Morita H."/>
            <person name="Toh H."/>
            <person name="Fukuda S."/>
            <person name="Horikawa H."/>
            <person name="Oshima K."/>
            <person name="Suzuki T."/>
            <person name="Murakami M."/>
            <person name="Hisamatsu S."/>
            <person name="Kato Y."/>
            <person name="Takizawa T."/>
            <person name="Fukuoka H."/>
            <person name="Yoshimura T."/>
            <person name="Itoh K."/>
            <person name="O'Sullivan D.J."/>
            <person name="McKay L.L."/>
            <person name="Ohno H."/>
            <person name="Kikuchi J."/>
            <person name="Masaoka T."/>
            <person name="Hattori M."/>
        </authorList>
    </citation>
    <scope>NUCLEOTIDE SEQUENCE [LARGE SCALE GENOMIC DNA]</scope>
    <source>
        <strain>JCM 1112</strain>
    </source>
</reference>
<feature type="chain" id="PRO_1000137701" description="Chaperone protein DnaJ">
    <location>
        <begin position="1"/>
        <end position="383"/>
    </location>
</feature>
<feature type="domain" description="J" evidence="1">
    <location>
        <begin position="5"/>
        <end position="69"/>
    </location>
</feature>
<feature type="repeat" description="CXXCXGXG motif">
    <location>
        <begin position="151"/>
        <end position="158"/>
    </location>
</feature>
<feature type="repeat" description="CXXCXGXG motif">
    <location>
        <begin position="168"/>
        <end position="175"/>
    </location>
</feature>
<feature type="repeat" description="CXXCXGXG motif">
    <location>
        <begin position="194"/>
        <end position="201"/>
    </location>
</feature>
<feature type="repeat" description="CXXCXGXG motif">
    <location>
        <begin position="210"/>
        <end position="217"/>
    </location>
</feature>
<feature type="zinc finger region" description="CR-type" evidence="1">
    <location>
        <begin position="138"/>
        <end position="222"/>
    </location>
</feature>
<feature type="binding site" evidence="1">
    <location>
        <position position="151"/>
    </location>
    <ligand>
        <name>Zn(2+)</name>
        <dbReference type="ChEBI" id="CHEBI:29105"/>
        <label>1</label>
    </ligand>
</feature>
<feature type="binding site" evidence="1">
    <location>
        <position position="154"/>
    </location>
    <ligand>
        <name>Zn(2+)</name>
        <dbReference type="ChEBI" id="CHEBI:29105"/>
        <label>1</label>
    </ligand>
</feature>
<feature type="binding site" evidence="1">
    <location>
        <position position="168"/>
    </location>
    <ligand>
        <name>Zn(2+)</name>
        <dbReference type="ChEBI" id="CHEBI:29105"/>
        <label>2</label>
    </ligand>
</feature>
<feature type="binding site" evidence="1">
    <location>
        <position position="171"/>
    </location>
    <ligand>
        <name>Zn(2+)</name>
        <dbReference type="ChEBI" id="CHEBI:29105"/>
        <label>2</label>
    </ligand>
</feature>
<feature type="binding site" evidence="1">
    <location>
        <position position="194"/>
    </location>
    <ligand>
        <name>Zn(2+)</name>
        <dbReference type="ChEBI" id="CHEBI:29105"/>
        <label>2</label>
    </ligand>
</feature>
<feature type="binding site" evidence="1">
    <location>
        <position position="197"/>
    </location>
    <ligand>
        <name>Zn(2+)</name>
        <dbReference type="ChEBI" id="CHEBI:29105"/>
        <label>2</label>
    </ligand>
</feature>
<feature type="binding site" evidence="1">
    <location>
        <position position="210"/>
    </location>
    <ligand>
        <name>Zn(2+)</name>
        <dbReference type="ChEBI" id="CHEBI:29105"/>
        <label>1</label>
    </ligand>
</feature>
<feature type="binding site" evidence="1">
    <location>
        <position position="213"/>
    </location>
    <ligand>
        <name>Zn(2+)</name>
        <dbReference type="ChEBI" id="CHEBI:29105"/>
        <label>1</label>
    </ligand>
</feature>
<gene>
    <name evidence="1" type="primary">dnaJ</name>
    <name type="ordered locus">LAR_0680</name>
</gene>
<proteinExistence type="inferred from homology"/>
<organism>
    <name type="scientific">Limosilactobacillus reuteri subsp. reuteri (strain JCM 1112)</name>
    <name type="common">Lactobacillus reuteri</name>
    <dbReference type="NCBI Taxonomy" id="557433"/>
    <lineage>
        <taxon>Bacteria</taxon>
        <taxon>Bacillati</taxon>
        <taxon>Bacillota</taxon>
        <taxon>Bacilli</taxon>
        <taxon>Lactobacillales</taxon>
        <taxon>Lactobacillaceae</taxon>
        <taxon>Limosilactobacillus</taxon>
    </lineage>
</organism>
<dbReference type="EMBL" id="AP007281">
    <property type="protein sequence ID" value="BAG25196.1"/>
    <property type="molecule type" value="Genomic_DNA"/>
</dbReference>
<dbReference type="RefSeq" id="WP_003665811.1">
    <property type="nucleotide sequence ID" value="NC_010609.1"/>
</dbReference>
<dbReference type="SMR" id="B2G6W4"/>
<dbReference type="GeneID" id="77190746"/>
<dbReference type="KEGG" id="lrf:LAR_0680"/>
<dbReference type="HOGENOM" id="CLU_017633_0_7_9"/>
<dbReference type="GO" id="GO:0005737">
    <property type="term" value="C:cytoplasm"/>
    <property type="evidence" value="ECO:0007669"/>
    <property type="project" value="UniProtKB-SubCell"/>
</dbReference>
<dbReference type="GO" id="GO:0005524">
    <property type="term" value="F:ATP binding"/>
    <property type="evidence" value="ECO:0007669"/>
    <property type="project" value="InterPro"/>
</dbReference>
<dbReference type="GO" id="GO:0031072">
    <property type="term" value="F:heat shock protein binding"/>
    <property type="evidence" value="ECO:0007669"/>
    <property type="project" value="InterPro"/>
</dbReference>
<dbReference type="GO" id="GO:0051082">
    <property type="term" value="F:unfolded protein binding"/>
    <property type="evidence" value="ECO:0007669"/>
    <property type="project" value="UniProtKB-UniRule"/>
</dbReference>
<dbReference type="GO" id="GO:0008270">
    <property type="term" value="F:zinc ion binding"/>
    <property type="evidence" value="ECO:0007669"/>
    <property type="project" value="UniProtKB-UniRule"/>
</dbReference>
<dbReference type="GO" id="GO:0051085">
    <property type="term" value="P:chaperone cofactor-dependent protein refolding"/>
    <property type="evidence" value="ECO:0007669"/>
    <property type="project" value="TreeGrafter"/>
</dbReference>
<dbReference type="GO" id="GO:0006260">
    <property type="term" value="P:DNA replication"/>
    <property type="evidence" value="ECO:0007669"/>
    <property type="project" value="UniProtKB-KW"/>
</dbReference>
<dbReference type="GO" id="GO:0042026">
    <property type="term" value="P:protein refolding"/>
    <property type="evidence" value="ECO:0007669"/>
    <property type="project" value="TreeGrafter"/>
</dbReference>
<dbReference type="GO" id="GO:0009408">
    <property type="term" value="P:response to heat"/>
    <property type="evidence" value="ECO:0007669"/>
    <property type="project" value="InterPro"/>
</dbReference>
<dbReference type="CDD" id="cd06257">
    <property type="entry name" value="DnaJ"/>
    <property type="match status" value="1"/>
</dbReference>
<dbReference type="CDD" id="cd10747">
    <property type="entry name" value="DnaJ_C"/>
    <property type="match status" value="1"/>
</dbReference>
<dbReference type="CDD" id="cd10719">
    <property type="entry name" value="DnaJ_zf"/>
    <property type="match status" value="1"/>
</dbReference>
<dbReference type="FunFam" id="2.60.260.20:FF:000005">
    <property type="entry name" value="Chaperone protein dnaJ 1, mitochondrial"/>
    <property type="match status" value="1"/>
</dbReference>
<dbReference type="FunFam" id="1.10.287.110:FF:000031">
    <property type="entry name" value="Molecular chaperone DnaJ"/>
    <property type="match status" value="1"/>
</dbReference>
<dbReference type="FunFam" id="2.10.230.10:FF:000002">
    <property type="entry name" value="Molecular chaperone DnaJ"/>
    <property type="match status" value="1"/>
</dbReference>
<dbReference type="Gene3D" id="1.10.287.110">
    <property type="entry name" value="DnaJ domain"/>
    <property type="match status" value="1"/>
</dbReference>
<dbReference type="Gene3D" id="2.10.230.10">
    <property type="entry name" value="Heat shock protein DnaJ, cysteine-rich domain"/>
    <property type="match status" value="1"/>
</dbReference>
<dbReference type="Gene3D" id="2.60.260.20">
    <property type="entry name" value="Urease metallochaperone UreE, N-terminal domain"/>
    <property type="match status" value="2"/>
</dbReference>
<dbReference type="HAMAP" id="MF_01152">
    <property type="entry name" value="DnaJ"/>
    <property type="match status" value="1"/>
</dbReference>
<dbReference type="InterPro" id="IPR012724">
    <property type="entry name" value="DnaJ"/>
</dbReference>
<dbReference type="InterPro" id="IPR002939">
    <property type="entry name" value="DnaJ_C"/>
</dbReference>
<dbReference type="InterPro" id="IPR001623">
    <property type="entry name" value="DnaJ_domain"/>
</dbReference>
<dbReference type="InterPro" id="IPR018253">
    <property type="entry name" value="DnaJ_domain_CS"/>
</dbReference>
<dbReference type="InterPro" id="IPR008971">
    <property type="entry name" value="HSP40/DnaJ_pept-bd"/>
</dbReference>
<dbReference type="InterPro" id="IPR001305">
    <property type="entry name" value="HSP_DnaJ_Cys-rich_dom"/>
</dbReference>
<dbReference type="InterPro" id="IPR036410">
    <property type="entry name" value="HSP_DnaJ_Cys-rich_dom_sf"/>
</dbReference>
<dbReference type="InterPro" id="IPR036869">
    <property type="entry name" value="J_dom_sf"/>
</dbReference>
<dbReference type="NCBIfam" id="TIGR02349">
    <property type="entry name" value="DnaJ_bact"/>
    <property type="match status" value="1"/>
</dbReference>
<dbReference type="NCBIfam" id="NF008035">
    <property type="entry name" value="PRK10767.1"/>
    <property type="match status" value="1"/>
</dbReference>
<dbReference type="NCBIfam" id="NF010869">
    <property type="entry name" value="PRK14276.1"/>
    <property type="match status" value="1"/>
</dbReference>
<dbReference type="PANTHER" id="PTHR43096:SF48">
    <property type="entry name" value="CHAPERONE PROTEIN DNAJ"/>
    <property type="match status" value="1"/>
</dbReference>
<dbReference type="PANTHER" id="PTHR43096">
    <property type="entry name" value="DNAJ HOMOLOG 1, MITOCHONDRIAL-RELATED"/>
    <property type="match status" value="1"/>
</dbReference>
<dbReference type="Pfam" id="PF00226">
    <property type="entry name" value="DnaJ"/>
    <property type="match status" value="1"/>
</dbReference>
<dbReference type="Pfam" id="PF01556">
    <property type="entry name" value="DnaJ_C"/>
    <property type="match status" value="1"/>
</dbReference>
<dbReference type="Pfam" id="PF00684">
    <property type="entry name" value="DnaJ_CXXCXGXG"/>
    <property type="match status" value="1"/>
</dbReference>
<dbReference type="PRINTS" id="PR00625">
    <property type="entry name" value="JDOMAIN"/>
</dbReference>
<dbReference type="SMART" id="SM00271">
    <property type="entry name" value="DnaJ"/>
    <property type="match status" value="1"/>
</dbReference>
<dbReference type="SUPFAM" id="SSF46565">
    <property type="entry name" value="Chaperone J-domain"/>
    <property type="match status" value="1"/>
</dbReference>
<dbReference type="SUPFAM" id="SSF57938">
    <property type="entry name" value="DnaJ/Hsp40 cysteine-rich domain"/>
    <property type="match status" value="1"/>
</dbReference>
<dbReference type="SUPFAM" id="SSF49493">
    <property type="entry name" value="HSP40/DnaJ peptide-binding domain"/>
    <property type="match status" value="2"/>
</dbReference>
<dbReference type="PROSITE" id="PS00636">
    <property type="entry name" value="DNAJ_1"/>
    <property type="match status" value="1"/>
</dbReference>
<dbReference type="PROSITE" id="PS50076">
    <property type="entry name" value="DNAJ_2"/>
    <property type="match status" value="1"/>
</dbReference>
<dbReference type="PROSITE" id="PS51188">
    <property type="entry name" value="ZF_CR"/>
    <property type="match status" value="1"/>
</dbReference>
<name>DNAJ_LIMRJ</name>
<accession>B2G6W4</accession>
<evidence type="ECO:0000255" key="1">
    <source>
        <dbReference type="HAMAP-Rule" id="MF_01152"/>
    </source>
</evidence>
<protein>
    <recommendedName>
        <fullName evidence="1">Chaperone protein DnaJ</fullName>
    </recommendedName>
</protein>